<gene>
    <name type="primary">TEAD1</name>
    <name type="synonym">TCF13</name>
    <name type="synonym">TEF1</name>
</gene>
<comment type="function">
    <text evidence="5 6">Transcription factor which plays a key role in the Hippo signaling pathway, a pathway involved in organ size control and tumor suppression by restricting proliferation and promoting apoptosis. The core of this pathway is composed of a kinase cascade wherein MST1/MST2, in complex with its regulatory protein SAV1, phosphorylates and activates LATS1/2 in complex with its regulatory protein MOB1, which in turn phosphorylates and inactivates YAP1 oncoprotein and WWTR1/TAZ. Acts by mediating gene expression of YAP1 and WWTR1/TAZ, thereby regulating cell proliferation, migration and epithelial mesenchymal transition (EMT) induction. Binds specifically and cooperatively to the SPH and GT-IIC 'enhansons' (5'-GTGGAATGT-3') and activates transcription in vivo in a cell-specific manner. The activation function appears to be mediated by a limiting cell-specific transcriptional intermediary factor (TIF). Involved in cardiac development. Binds to the M-CAT motif.</text>
</comment>
<comment type="subunit">
    <text evidence="5 6 7">Interacts with YAP1 and WWTR1/TAZ.</text>
</comment>
<comment type="interaction">
    <interactant intactId="EBI-529156">
        <id>P28347</id>
    </interactant>
    <interactant intactId="EBI-297202">
        <id>Q06609</id>
        <label>RAD51</label>
    </interactant>
    <organismsDiffer>false</organismsDiffer>
    <experiments>2</experiments>
</comment>
<comment type="interaction">
    <interactant intactId="EBI-529156">
        <id>P28347</id>
    </interactant>
    <interactant intactId="EBI-1044059">
        <id>P46937</id>
        <label>YAP1</label>
    </interactant>
    <organismsDiffer>false</organismsDiffer>
    <experiments>11</experiments>
</comment>
<comment type="interaction">
    <interactant intactId="EBI-529156">
        <id>P28347</id>
    </interactant>
    <interactant intactId="EBI-162687">
        <id>Q26366</id>
        <label>vg</label>
    </interactant>
    <organismsDiffer>true</organismsDiffer>
    <experiments>3</experiments>
</comment>
<comment type="interaction">
    <interactant intactId="EBI-12151837">
        <id>P28347-2</id>
    </interactant>
    <interactant intactId="EBI-640741">
        <id>P01023</id>
        <label>A2M</label>
    </interactant>
    <organismsDiffer>false</organismsDiffer>
    <experiments>3</experiments>
</comment>
<comment type="interaction">
    <interactant intactId="EBI-12151837">
        <id>P28347-2</id>
    </interactant>
    <interactant intactId="EBI-930964">
        <id>P54253</id>
        <label>ATXN1</label>
    </interactant>
    <organismsDiffer>false</organismsDiffer>
    <experiments>3</experiments>
</comment>
<comment type="interaction">
    <interactant intactId="EBI-12151837">
        <id>P28347-2</id>
    </interactant>
    <interactant intactId="EBI-2115097">
        <id>P07339</id>
        <label>CTSD</label>
    </interactant>
    <organismsDiffer>false</organismsDiffer>
    <experiments>3</experiments>
</comment>
<comment type="interaction">
    <interactant intactId="EBI-12151837">
        <id>P28347-2</id>
    </interactant>
    <interactant intactId="EBI-10968534">
        <id>P50570-2</id>
        <label>DNM2</label>
    </interactant>
    <organismsDiffer>false</organismsDiffer>
    <experiments>3</experiments>
</comment>
<comment type="interaction">
    <interactant intactId="EBI-12151837">
        <id>P28347-2</id>
    </interactant>
    <interactant intactId="EBI-747754">
        <id>P28799</id>
        <label>GRN</label>
    </interactant>
    <organismsDiffer>false</organismsDiffer>
    <experiments>3</experiments>
</comment>
<comment type="interaction">
    <interactant intactId="EBI-12151837">
        <id>P28347-2</id>
    </interactant>
    <interactant intactId="EBI-466029">
        <id>P42858</id>
        <label>HTT</label>
    </interactant>
    <organismsDiffer>false</organismsDiffer>
    <experiments>18</experiments>
</comment>
<comment type="interaction">
    <interactant intactId="EBI-12151837">
        <id>P28347-2</id>
    </interactant>
    <interactant intactId="EBI-748974">
        <id>Q96CV9</id>
        <label>OPTN</label>
    </interactant>
    <organismsDiffer>false</organismsDiffer>
    <experiments>3</experiments>
</comment>
<comment type="interaction">
    <interactant intactId="EBI-12151837">
        <id>P28347-2</id>
    </interactant>
    <interactant intactId="EBI-2846068">
        <id>Q9BXM7</id>
        <label>PINK1</label>
    </interactant>
    <organismsDiffer>false</organismsDiffer>
    <experiments>3</experiments>
</comment>
<comment type="interaction">
    <interactant intactId="EBI-12151837">
        <id>P28347-2</id>
    </interactant>
    <interactant intactId="EBI-396669">
        <id>Q9Y3C5</id>
        <label>RNF11</label>
    </interactant>
    <organismsDiffer>false</organismsDiffer>
    <experiments>3</experiments>
</comment>
<comment type="interaction">
    <interactant intactId="EBI-12151837">
        <id>P28347-2</id>
    </interactant>
    <interactant intactId="EBI-985879">
        <id>P37840</id>
        <label>SNCA</label>
    </interactant>
    <organismsDiffer>false</organismsDiffer>
    <experiments>3</experiments>
</comment>
<comment type="interaction">
    <interactant intactId="EBI-12151837">
        <id>P28347-2</id>
    </interactant>
    <interactant intactId="EBI-2129889">
        <id>O75382</id>
        <label>TRIM3</label>
    </interactant>
    <organismsDiffer>false</organismsDiffer>
    <experiments>3</experiments>
</comment>
<comment type="interaction">
    <interactant intactId="EBI-12151837">
        <id>P28347-2</id>
    </interactant>
    <interactant intactId="EBI-11957216">
        <id>A8MV65-2</id>
        <label>VGLL3</label>
    </interactant>
    <organismsDiffer>false</organismsDiffer>
    <experiments>3</experiments>
</comment>
<comment type="interaction">
    <interactant intactId="EBI-12151837">
        <id>P28347-2</id>
    </interactant>
    <interactant intactId="EBI-720609">
        <id>O76024</id>
        <label>WFS1</label>
    </interactant>
    <organismsDiffer>false</organismsDiffer>
    <experiments>3</experiments>
</comment>
<comment type="interaction">
    <interactant intactId="EBI-12151837">
        <id>P28347-2</id>
    </interactant>
    <interactant intactId="EBI-747743">
        <id>Q9GZV5</id>
        <label>WWTR1</label>
    </interactant>
    <organismsDiffer>false</organismsDiffer>
    <experiments>3</experiments>
</comment>
<comment type="subcellular location">
    <subcellularLocation>
        <location evidence="8">Nucleus</location>
    </subcellularLocation>
</comment>
<comment type="alternative products">
    <event type="alternative splicing"/>
    <isoform>
        <id>P28347-1</id>
        <name>1</name>
        <sequence type="displayed"/>
    </isoform>
    <isoform>
        <id>P28347-2</id>
        <name>2</name>
        <sequence type="described" ref="VSP_056275 VSP_056276 VSP_056277"/>
    </isoform>
</comment>
<comment type="tissue specificity">
    <text>Preferentially expressed in skeletal muscle. Lower levels in pancreas, placenta, and heart.</text>
</comment>
<comment type="PTM">
    <text evidence="8">Lactylation by AARS1 promotes nuclear localization and stabilization of YAP1, leading to increased Hippo signaling pathway (PubMed:38512451). Delactylated by SIRT1 (PubMed:38512451).</text>
</comment>
<comment type="disease" evidence="4 5 7">
    <disease id="DI-02349">
        <name>Sveinsson chorioretinal atrophy</name>
        <acronym>SCRA</acronym>
        <description>Characterized by symmetrical lesions radiating from the optic disk involving the retina and the choroid.</description>
        <dbReference type="MIM" id="108985"/>
    </disease>
    <text>The disease is caused by variants affecting the gene represented in this entry.</text>
</comment>
<comment type="caution">
    <text evidence="10">It is uncertain whether Met-1 or Met-16 is the initiator.</text>
</comment>
<comment type="sequence caution" evidence="10">
    <conflict type="miscellaneous discrepancy">
        <sequence resource="EMBL-CDS" id="AAB00791"/>
    </conflict>
    <text>Unusual initiator. The initiator methionine is coded by a non-canonical ATT isoleucine codon.</text>
</comment>
<organism>
    <name type="scientific">Homo sapiens</name>
    <name type="common">Human</name>
    <dbReference type="NCBI Taxonomy" id="9606"/>
    <lineage>
        <taxon>Eukaryota</taxon>
        <taxon>Metazoa</taxon>
        <taxon>Chordata</taxon>
        <taxon>Craniata</taxon>
        <taxon>Vertebrata</taxon>
        <taxon>Euteleostomi</taxon>
        <taxon>Mammalia</taxon>
        <taxon>Eutheria</taxon>
        <taxon>Euarchontoglires</taxon>
        <taxon>Primates</taxon>
        <taxon>Haplorrhini</taxon>
        <taxon>Catarrhini</taxon>
        <taxon>Hominidae</taxon>
        <taxon>Homo</taxon>
    </lineage>
</organism>
<feature type="chain" id="PRO_0000205930" description="Transcriptional enhancer factor TEF-1">
    <location>
        <begin position="1"/>
        <end position="426"/>
    </location>
</feature>
<feature type="DNA-binding region" description="TEA" evidence="2">
    <location>
        <begin position="28"/>
        <end position="104"/>
    </location>
</feature>
<feature type="region of interest" description="Disordered" evidence="3">
    <location>
        <begin position="1"/>
        <end position="31"/>
    </location>
</feature>
<feature type="region of interest" description="Transcriptional activation" evidence="1">
    <location>
        <begin position="167"/>
        <end position="426"/>
    </location>
</feature>
<feature type="compositionally biased region" description="Polar residues" evidence="3">
    <location>
        <begin position="1"/>
        <end position="12"/>
    </location>
</feature>
<feature type="compositionally biased region" description="Basic and acidic residues" evidence="3">
    <location>
        <begin position="15"/>
        <end position="28"/>
    </location>
</feature>
<feature type="modified residue" description="N-acetylmethionine" evidence="11 12">
    <location>
        <position position="1"/>
    </location>
</feature>
<feature type="modified residue" description="Phosphoserine" evidence="13">
    <location>
        <position position="11"/>
    </location>
</feature>
<feature type="modified residue" description="N6-lactoyllysine" evidence="8">
    <location>
        <position position="108"/>
    </location>
</feature>
<feature type="splice variant" id="VSP_056275" description="In isoform 2." evidence="9">
    <location>
        <begin position="1"/>
        <end position="15"/>
    </location>
</feature>
<feature type="splice variant" id="VSP_056276" description="In isoform 2." evidence="9">
    <original>K</original>
    <variation>KVTSM</variation>
    <location>
        <position position="110"/>
    </location>
</feature>
<feature type="splice variant" id="VSP_056277" description="In isoform 2." evidence="9">
    <location>
        <begin position="234"/>
        <end position="291"/>
    </location>
</feature>
<feature type="sequence variant" id="VAR_031530" description="In SCRA; loss of interaction with YAP1 and also activation by YAP1; dbSNP:rs11567847." evidence="4 5 7">
    <original>Y</original>
    <variation>H</variation>
    <location>
        <position position="421"/>
    </location>
</feature>
<feature type="mutagenesis site" description="Nearly abolished lactylation." evidence="8">
    <original>K</original>
    <variation>R</variation>
    <location>
        <position position="108"/>
    </location>
</feature>
<feature type="mutagenesis site" description="Important loss of interaction with YAP1." evidence="7">
    <original>Y</original>
    <variation>A</variation>
    <location>
        <position position="421"/>
    </location>
</feature>
<feature type="helix" evidence="14">
    <location>
        <begin position="29"/>
        <end position="31"/>
    </location>
</feature>
<feature type="turn" evidence="15">
    <location>
        <begin position="32"/>
        <end position="35"/>
    </location>
</feature>
<feature type="helix" evidence="15">
    <location>
        <begin position="37"/>
        <end position="49"/>
    </location>
</feature>
<feature type="strand" evidence="14">
    <location>
        <begin position="52"/>
        <end position="54"/>
    </location>
</feature>
<feature type="strand" evidence="16">
    <location>
        <begin position="62"/>
        <end position="64"/>
    </location>
</feature>
<feature type="helix" evidence="15">
    <location>
        <begin position="69"/>
        <end position="81"/>
    </location>
</feature>
<feature type="helix" evidence="15">
    <location>
        <begin position="87"/>
        <end position="98"/>
    </location>
</feature>
<feature type="strand" evidence="18">
    <location>
        <begin position="217"/>
        <end position="230"/>
    </location>
</feature>
<feature type="strand" evidence="18">
    <location>
        <begin position="233"/>
        <end position="242"/>
    </location>
</feature>
<feature type="strand" evidence="18">
    <location>
        <begin position="256"/>
        <end position="258"/>
    </location>
</feature>
<feature type="helix" evidence="18">
    <location>
        <begin position="259"/>
        <end position="261"/>
    </location>
</feature>
<feature type="helix" evidence="18">
    <location>
        <begin position="263"/>
        <end position="265"/>
    </location>
</feature>
<feature type="helix" evidence="18">
    <location>
        <begin position="273"/>
        <end position="279"/>
    </location>
</feature>
<feature type="helix" evidence="18">
    <location>
        <begin position="282"/>
        <end position="284"/>
    </location>
</feature>
<feature type="strand" evidence="18">
    <location>
        <begin position="285"/>
        <end position="292"/>
    </location>
</feature>
<feature type="strand" evidence="18">
    <location>
        <begin position="304"/>
        <end position="316"/>
    </location>
</feature>
<feature type="strand" evidence="18">
    <location>
        <begin position="319"/>
        <end position="328"/>
    </location>
</feature>
<feature type="strand" evidence="18">
    <location>
        <begin position="331"/>
        <end position="341"/>
    </location>
</feature>
<feature type="strand" evidence="18">
    <location>
        <begin position="343"/>
        <end position="345"/>
    </location>
</feature>
<feature type="strand" evidence="18">
    <location>
        <begin position="348"/>
        <end position="357"/>
    </location>
</feature>
<feature type="helix" evidence="18">
    <location>
        <begin position="360"/>
        <end position="371"/>
    </location>
</feature>
<feature type="strand" evidence="17">
    <location>
        <begin position="372"/>
        <end position="374"/>
    </location>
</feature>
<feature type="helix" evidence="18">
    <location>
        <begin position="375"/>
        <end position="382"/>
    </location>
</feature>
<feature type="strand" evidence="18">
    <location>
        <begin position="385"/>
        <end position="393"/>
    </location>
</feature>
<feature type="turn" evidence="18">
    <location>
        <begin position="394"/>
        <end position="396"/>
    </location>
</feature>
<feature type="strand" evidence="18">
    <location>
        <begin position="399"/>
        <end position="409"/>
    </location>
</feature>
<feature type="strand" evidence="17">
    <location>
        <begin position="411"/>
        <end position="414"/>
    </location>
</feature>
<feature type="strand" evidence="18">
    <location>
        <begin position="417"/>
        <end position="424"/>
    </location>
</feature>
<name>TEAD1_HUMAN</name>
<dbReference type="EMBL" id="M63896">
    <property type="protein sequence ID" value="AAB00791.1"/>
    <property type="status" value="ALT_SEQ"/>
    <property type="molecule type" value="Genomic_DNA"/>
</dbReference>
<dbReference type="EMBL" id="AC013549">
    <property type="status" value="NOT_ANNOTATED_CDS"/>
    <property type="molecule type" value="Genomic_DNA"/>
</dbReference>
<dbReference type="EMBL" id="AC084859">
    <property type="status" value="NOT_ANNOTATED_CDS"/>
    <property type="molecule type" value="Genomic_DNA"/>
</dbReference>
<dbReference type="EMBL" id="AC107881">
    <property type="status" value="NOT_ANNOTATED_CDS"/>
    <property type="molecule type" value="Genomic_DNA"/>
</dbReference>
<dbReference type="EMBL" id="BC115398">
    <property type="protein sequence ID" value="AAI15399.1"/>
    <property type="molecule type" value="mRNA"/>
</dbReference>
<dbReference type="CCDS" id="CCDS7810.2">
    <molecule id="P28347-1"/>
</dbReference>
<dbReference type="PIR" id="A40032">
    <property type="entry name" value="A40032"/>
</dbReference>
<dbReference type="RefSeq" id="NP_068780.2">
    <molecule id="P28347-1"/>
    <property type="nucleotide sequence ID" value="NM_021961.6"/>
</dbReference>
<dbReference type="PDB" id="2HZD">
    <property type="method" value="NMR"/>
    <property type="chains" value="A=28-104"/>
</dbReference>
<dbReference type="PDB" id="3KYS">
    <property type="method" value="X-ray"/>
    <property type="resolution" value="2.80 A"/>
    <property type="chains" value="A/C=209-426"/>
</dbReference>
<dbReference type="PDB" id="4RE1">
    <property type="method" value="X-ray"/>
    <property type="resolution" value="2.20 A"/>
    <property type="chains" value="A/B=209-426"/>
</dbReference>
<dbReference type="PDB" id="4Z8E">
    <property type="method" value="X-ray"/>
    <property type="resolution" value="2.09 A"/>
    <property type="chains" value="A/B/C=28-104"/>
</dbReference>
<dbReference type="PDB" id="5NNX">
    <property type="method" value="X-ray"/>
    <property type="resolution" value="3.29 A"/>
    <property type="chains" value="A=31-104"/>
</dbReference>
<dbReference type="PDB" id="6HIL">
    <property type="method" value="X-ray"/>
    <property type="resolution" value="2.30 A"/>
    <property type="chains" value="A/B/C/D=208-425"/>
</dbReference>
<dbReference type="PDB" id="6IM5">
    <property type="method" value="X-ray"/>
    <property type="resolution" value="1.70 A"/>
    <property type="chains" value="A/B=210-426"/>
</dbReference>
<dbReference type="PDB" id="7CMM">
    <property type="method" value="X-ray"/>
    <property type="resolution" value="3.50 A"/>
    <property type="chains" value="A/B/C/D=207-426"/>
</dbReference>
<dbReference type="PDB" id="7ZJP">
    <property type="method" value="X-ray"/>
    <property type="resolution" value="2.19 A"/>
    <property type="chains" value="A/B=209-426"/>
</dbReference>
<dbReference type="PDB" id="8Q68">
    <property type="method" value="X-ray"/>
    <property type="resolution" value="1.58 A"/>
    <property type="chains" value="A/B=209-426"/>
</dbReference>
<dbReference type="PDB" id="9FZA">
    <property type="method" value="X-ray"/>
    <property type="resolution" value="2.21 A"/>
    <property type="chains" value="A/C=209-426"/>
</dbReference>
<dbReference type="PDB" id="9GAX">
    <property type="method" value="X-ray"/>
    <property type="resolution" value="1.93 A"/>
    <property type="chains" value="A/B=209-426"/>
</dbReference>
<dbReference type="PDBsum" id="2HZD"/>
<dbReference type="PDBsum" id="3KYS"/>
<dbReference type="PDBsum" id="4RE1"/>
<dbReference type="PDBsum" id="4Z8E"/>
<dbReference type="PDBsum" id="5NNX"/>
<dbReference type="PDBsum" id="6HIL"/>
<dbReference type="PDBsum" id="6IM5"/>
<dbReference type="PDBsum" id="7CMM"/>
<dbReference type="PDBsum" id="7ZJP"/>
<dbReference type="PDBsum" id="8Q68"/>
<dbReference type="PDBsum" id="9FZA"/>
<dbReference type="PDBsum" id="9GAX"/>
<dbReference type="SMR" id="P28347"/>
<dbReference type="BioGRID" id="112862">
    <property type="interactions" value="164"/>
</dbReference>
<dbReference type="ComplexPortal" id="CPX-256">
    <property type="entry name" value="YAP1-TEAD1 transcription factor complex"/>
</dbReference>
<dbReference type="DIP" id="DIP-34360N"/>
<dbReference type="FunCoup" id="P28347">
    <property type="interactions" value="1763"/>
</dbReference>
<dbReference type="IntAct" id="P28347">
    <property type="interactions" value="149"/>
</dbReference>
<dbReference type="MINT" id="P28347"/>
<dbReference type="STRING" id="9606.ENSP00000435233"/>
<dbReference type="BindingDB" id="P28347"/>
<dbReference type="ChEMBL" id="CHEMBL3334416"/>
<dbReference type="DrugCentral" id="P28347"/>
<dbReference type="GuidetoPHARMACOLOGY" id="3240"/>
<dbReference type="GlyCosmos" id="P28347">
    <property type="glycosylation" value="3 sites, 1 glycan"/>
</dbReference>
<dbReference type="GlyGen" id="P28347">
    <property type="glycosylation" value="3 sites, 1 O-linked glycan (3 sites)"/>
</dbReference>
<dbReference type="iPTMnet" id="P28347"/>
<dbReference type="PhosphoSitePlus" id="P28347"/>
<dbReference type="SwissPalm" id="P28347"/>
<dbReference type="BioMuta" id="TEAD1"/>
<dbReference type="DMDM" id="3041733"/>
<dbReference type="jPOST" id="P28347"/>
<dbReference type="MassIVE" id="P28347"/>
<dbReference type="PaxDb" id="9606-ENSP00000435233"/>
<dbReference type="PeptideAtlas" id="P28347"/>
<dbReference type="ProteomicsDB" id="54479">
    <molecule id="P28347-1"/>
</dbReference>
<dbReference type="ProteomicsDB" id="674"/>
<dbReference type="Pumba" id="P28347"/>
<dbReference type="Antibodypedia" id="11848">
    <property type="antibodies" value="272 antibodies from 35 providers"/>
</dbReference>
<dbReference type="DNASU" id="7003"/>
<dbReference type="Ensembl" id="ENST00000334310.10">
    <molecule id="P28347-2"/>
    <property type="protein sequence ID" value="ENSP00000334754.6"/>
    <property type="gene ID" value="ENSG00000187079.20"/>
</dbReference>
<dbReference type="Ensembl" id="ENST00000527636.7">
    <molecule id="P28347-1"/>
    <property type="protein sequence ID" value="ENSP00000435233.2"/>
    <property type="gene ID" value="ENSG00000187079.20"/>
</dbReference>
<dbReference type="GeneID" id="7003"/>
<dbReference type="KEGG" id="hsa:7003"/>
<dbReference type="MANE-Select" id="ENST00000527636.7">
    <property type="protein sequence ID" value="ENSP00000435233.2"/>
    <property type="RefSeq nucleotide sequence ID" value="NM_021961.6"/>
    <property type="RefSeq protein sequence ID" value="NP_068780.2"/>
</dbReference>
<dbReference type="UCSC" id="uc057zfn.1">
    <molecule id="P28347-1"/>
    <property type="organism name" value="human"/>
</dbReference>
<dbReference type="AGR" id="HGNC:11714"/>
<dbReference type="CTD" id="7003"/>
<dbReference type="DisGeNET" id="7003"/>
<dbReference type="GeneCards" id="TEAD1"/>
<dbReference type="HGNC" id="HGNC:11714">
    <property type="gene designation" value="TEAD1"/>
</dbReference>
<dbReference type="HPA" id="ENSG00000187079">
    <property type="expression patterns" value="Low tissue specificity"/>
</dbReference>
<dbReference type="MalaCards" id="TEAD1"/>
<dbReference type="MIM" id="108985">
    <property type="type" value="phenotype"/>
</dbReference>
<dbReference type="MIM" id="189967">
    <property type="type" value="gene"/>
</dbReference>
<dbReference type="neXtProt" id="NX_P28347"/>
<dbReference type="OpenTargets" id="ENSG00000187079"/>
<dbReference type="Orphanet" id="86813">
    <property type="disease" value="Helicoid peripapillary chorioretinal degeneration"/>
</dbReference>
<dbReference type="PharmGKB" id="PA36432"/>
<dbReference type="VEuPathDB" id="HostDB:ENSG00000187079"/>
<dbReference type="eggNOG" id="KOG3841">
    <property type="taxonomic scope" value="Eukaryota"/>
</dbReference>
<dbReference type="GeneTree" id="ENSGT00950000182956"/>
<dbReference type="InParanoid" id="P28347"/>
<dbReference type="OMA" id="SIWQPGL"/>
<dbReference type="OrthoDB" id="10006572at2759"/>
<dbReference type="PAN-GO" id="P28347">
    <property type="GO annotations" value="6 GO annotations based on evolutionary models"/>
</dbReference>
<dbReference type="PhylomeDB" id="P28347"/>
<dbReference type="PathwayCommons" id="P28347"/>
<dbReference type="Reactome" id="R-HSA-2032785">
    <property type="pathway name" value="YAP1- and WWTR1 (TAZ)-stimulated gene expression"/>
</dbReference>
<dbReference type="Reactome" id="R-HSA-8951671">
    <property type="pathway name" value="RUNX3 regulates YAP1-mediated transcription"/>
</dbReference>
<dbReference type="Reactome" id="R-HSA-9619665">
    <property type="pathway name" value="EGR2 and SOX10-mediated initiation of Schwann cell myelination"/>
</dbReference>
<dbReference type="SignaLink" id="P28347"/>
<dbReference type="SIGNOR" id="P28347"/>
<dbReference type="BioGRID-ORCS" id="7003">
    <property type="hits" value="139 hits in 1151 CRISPR screens"/>
</dbReference>
<dbReference type="CD-CODE" id="F11B6494">
    <property type="entry name" value="Synthetic Condensate 000269"/>
</dbReference>
<dbReference type="ChiTaRS" id="TEAD1">
    <property type="organism name" value="human"/>
</dbReference>
<dbReference type="EvolutionaryTrace" id="P28347"/>
<dbReference type="GeneWiki" id="TEAD1"/>
<dbReference type="GenomeRNAi" id="7003"/>
<dbReference type="Pharos" id="P28347">
    <property type="development level" value="Tchem"/>
</dbReference>
<dbReference type="PRO" id="PR:P28347"/>
<dbReference type="Proteomes" id="UP000005640">
    <property type="component" value="Chromosome 11"/>
</dbReference>
<dbReference type="RNAct" id="P28347">
    <property type="molecule type" value="protein"/>
</dbReference>
<dbReference type="Bgee" id="ENSG00000187079">
    <property type="expression patterns" value="Expressed in skeletal muscle tissue of rectus abdominis and 189 other cell types or tissues"/>
</dbReference>
<dbReference type="ExpressionAtlas" id="P28347">
    <property type="expression patterns" value="baseline and differential"/>
</dbReference>
<dbReference type="GO" id="GO:0000785">
    <property type="term" value="C:chromatin"/>
    <property type="evidence" value="ECO:0000247"/>
    <property type="project" value="NTNU_SB"/>
</dbReference>
<dbReference type="GO" id="GO:0005654">
    <property type="term" value="C:nucleoplasm"/>
    <property type="evidence" value="ECO:0000314"/>
    <property type="project" value="HPA"/>
</dbReference>
<dbReference type="GO" id="GO:0005634">
    <property type="term" value="C:nucleus"/>
    <property type="evidence" value="ECO:0000314"/>
    <property type="project" value="UniProt"/>
</dbReference>
<dbReference type="GO" id="GO:0140552">
    <property type="term" value="C:TEAD-YAP complex"/>
    <property type="evidence" value="ECO:0000314"/>
    <property type="project" value="CAFA"/>
</dbReference>
<dbReference type="GO" id="GO:0005667">
    <property type="term" value="C:transcription regulator complex"/>
    <property type="evidence" value="ECO:0000318"/>
    <property type="project" value="GO_Central"/>
</dbReference>
<dbReference type="GO" id="GO:0003677">
    <property type="term" value="F:DNA binding"/>
    <property type="evidence" value="ECO:0000304"/>
    <property type="project" value="ProtInc"/>
</dbReference>
<dbReference type="GO" id="GO:0001228">
    <property type="term" value="F:DNA-binding transcription activator activity, RNA polymerase II-specific"/>
    <property type="evidence" value="ECO:0007669"/>
    <property type="project" value="Ensembl"/>
</dbReference>
<dbReference type="GO" id="GO:0003700">
    <property type="term" value="F:DNA-binding transcription factor activity"/>
    <property type="evidence" value="ECO:0000314"/>
    <property type="project" value="UniProtKB"/>
</dbReference>
<dbReference type="GO" id="GO:0000981">
    <property type="term" value="F:DNA-binding transcription factor activity, RNA polymerase II-specific"/>
    <property type="evidence" value="ECO:0000315"/>
    <property type="project" value="BHF-UCL"/>
</dbReference>
<dbReference type="GO" id="GO:0000978">
    <property type="term" value="F:RNA polymerase II cis-regulatory region sequence-specific DNA binding"/>
    <property type="evidence" value="ECO:0000315"/>
    <property type="project" value="BHF-UCL"/>
</dbReference>
<dbReference type="GO" id="GO:1990837">
    <property type="term" value="F:sequence-specific double-stranded DNA binding"/>
    <property type="evidence" value="ECO:0000314"/>
    <property type="project" value="ARUK-UCL"/>
</dbReference>
<dbReference type="GO" id="GO:0048568">
    <property type="term" value="P:embryonic organ development"/>
    <property type="evidence" value="ECO:0000318"/>
    <property type="project" value="GO_Central"/>
</dbReference>
<dbReference type="GO" id="GO:0035329">
    <property type="term" value="P:hippo signaling"/>
    <property type="evidence" value="ECO:0000314"/>
    <property type="project" value="UniProtKB"/>
</dbReference>
<dbReference type="GO" id="GO:0030307">
    <property type="term" value="P:positive regulation of cell growth"/>
    <property type="evidence" value="ECO:0000314"/>
    <property type="project" value="ComplexPortal"/>
</dbReference>
<dbReference type="GO" id="GO:0045893">
    <property type="term" value="P:positive regulation of DNA-templated transcription"/>
    <property type="evidence" value="ECO:0000315"/>
    <property type="project" value="CAFA"/>
</dbReference>
<dbReference type="GO" id="GO:1902895">
    <property type="term" value="P:positive regulation of miRNA transcription"/>
    <property type="evidence" value="ECO:0000315"/>
    <property type="project" value="BHF-UCL"/>
</dbReference>
<dbReference type="GO" id="GO:0045944">
    <property type="term" value="P:positive regulation of transcription by RNA polymerase II"/>
    <property type="evidence" value="ECO:0000314"/>
    <property type="project" value="ComplexPortal"/>
</dbReference>
<dbReference type="GO" id="GO:0065003">
    <property type="term" value="P:protein-containing complex assembly"/>
    <property type="evidence" value="ECO:0000315"/>
    <property type="project" value="CAFA"/>
</dbReference>
<dbReference type="GO" id="GO:0006357">
    <property type="term" value="P:regulation of transcription by RNA polymerase II"/>
    <property type="evidence" value="ECO:0000318"/>
    <property type="project" value="GO_Central"/>
</dbReference>
<dbReference type="FunFam" id="2.70.50.80:FF:000001">
    <property type="entry name" value="Transcriptional enhancer factor TEF-1, putative"/>
    <property type="match status" value="1"/>
</dbReference>
<dbReference type="Gene3D" id="2.70.50.80">
    <property type="match status" value="1"/>
</dbReference>
<dbReference type="Gene3D" id="6.10.20.40">
    <property type="entry name" value="TEA/ATTS domain"/>
    <property type="match status" value="1"/>
</dbReference>
<dbReference type="IDEAL" id="IID00547"/>
<dbReference type="InterPro" id="IPR000818">
    <property type="entry name" value="TEA/ATTS_dom"/>
</dbReference>
<dbReference type="InterPro" id="IPR038096">
    <property type="entry name" value="TEA/ATTS_sf"/>
</dbReference>
<dbReference type="InterPro" id="IPR050937">
    <property type="entry name" value="TEC1_TEAD_TF"/>
</dbReference>
<dbReference type="InterPro" id="IPR016361">
    <property type="entry name" value="TEF_metazoa"/>
</dbReference>
<dbReference type="InterPro" id="IPR041086">
    <property type="entry name" value="YBD"/>
</dbReference>
<dbReference type="PANTHER" id="PTHR11834">
    <property type="entry name" value="TRANSCRIPTIONAL ENHANCER FACTOR TEF RELATED"/>
    <property type="match status" value="1"/>
</dbReference>
<dbReference type="PANTHER" id="PTHR11834:SF4">
    <property type="entry name" value="TRANSCRIPTIONAL ENHANCER FACTOR TEF-1"/>
    <property type="match status" value="1"/>
</dbReference>
<dbReference type="Pfam" id="PF01285">
    <property type="entry name" value="TEA"/>
    <property type="match status" value="1"/>
</dbReference>
<dbReference type="Pfam" id="PF17725">
    <property type="entry name" value="YBD"/>
    <property type="match status" value="1"/>
</dbReference>
<dbReference type="PIRSF" id="PIRSF002603">
    <property type="entry name" value="TEF"/>
    <property type="match status" value="1"/>
</dbReference>
<dbReference type="PRINTS" id="PR00065">
    <property type="entry name" value="TEADOMAIN"/>
</dbReference>
<dbReference type="SMART" id="SM00426">
    <property type="entry name" value="TEA"/>
    <property type="match status" value="1"/>
</dbReference>
<dbReference type="PROSITE" id="PS00554">
    <property type="entry name" value="TEA_1"/>
    <property type="match status" value="1"/>
</dbReference>
<dbReference type="PROSITE" id="PS51088">
    <property type="entry name" value="TEA_2"/>
    <property type="match status" value="1"/>
</dbReference>
<proteinExistence type="evidence at protein level"/>
<accession>P28347</accession>
<accession>A4FUP2</accession>
<accession>E7EV65</accession>
<evidence type="ECO:0000255" key="1"/>
<evidence type="ECO:0000255" key="2">
    <source>
        <dbReference type="PROSITE-ProRule" id="PRU00505"/>
    </source>
</evidence>
<evidence type="ECO:0000256" key="3">
    <source>
        <dbReference type="SAM" id="MobiDB-lite"/>
    </source>
</evidence>
<evidence type="ECO:0000269" key="4">
    <source>
    </source>
</evidence>
<evidence type="ECO:0000269" key="5">
    <source>
    </source>
</evidence>
<evidence type="ECO:0000269" key="6">
    <source>
    </source>
</evidence>
<evidence type="ECO:0000269" key="7">
    <source>
    </source>
</evidence>
<evidence type="ECO:0000269" key="8">
    <source>
    </source>
</evidence>
<evidence type="ECO:0000303" key="9">
    <source>
    </source>
</evidence>
<evidence type="ECO:0000305" key="10"/>
<evidence type="ECO:0007744" key="11">
    <source>
    </source>
</evidence>
<evidence type="ECO:0007744" key="12">
    <source>
    </source>
</evidence>
<evidence type="ECO:0007744" key="13">
    <source>
    </source>
</evidence>
<evidence type="ECO:0007829" key="14">
    <source>
        <dbReference type="PDB" id="2HZD"/>
    </source>
</evidence>
<evidence type="ECO:0007829" key="15">
    <source>
        <dbReference type="PDB" id="4Z8E"/>
    </source>
</evidence>
<evidence type="ECO:0007829" key="16">
    <source>
        <dbReference type="PDB" id="5NNX"/>
    </source>
</evidence>
<evidence type="ECO:0007829" key="17">
    <source>
        <dbReference type="PDB" id="6IM5"/>
    </source>
</evidence>
<evidence type="ECO:0007829" key="18">
    <source>
        <dbReference type="PDB" id="8Q68"/>
    </source>
</evidence>
<protein>
    <recommendedName>
        <fullName>Transcriptional enhancer factor TEF-1</fullName>
    </recommendedName>
    <alternativeName>
        <fullName>NTEF-1</fullName>
    </alternativeName>
    <alternativeName>
        <fullName>Protein GT-IIC</fullName>
    </alternativeName>
    <alternativeName>
        <fullName>TEA domain family member 1</fullName>
        <shortName>TEAD-1</shortName>
    </alternativeName>
    <alternativeName>
        <fullName>Transcription factor 13</fullName>
        <shortName>TCF-13</shortName>
    </alternativeName>
</protein>
<sequence>MEPSSWSGSESPAENMERMSDSADKPIDNDAEGVWSPDIEQSFQEALAIYPPCGRRKIILSDEGKMYGRNELIARYIKLRTGKTRTRKQVSSHIQVLARRKSRDFHSKLKDQTAKDKALQHMAAMSSAQIVSATAIHNKLGLPGIPRPTFPGAPGFWPGMIQTGQPGSSQDVKPFVQQAYPIQPAVTAPIPGFEPASAPAPSVPAWQGRSIGTTKLRLVEFSAFLEQQRDPDSYNKHLFVHIGHANHSYSDPLLESVDIRQIYDKFPEKKGGLKELFGKGPQNAFFLVKFWADLNCNIQDDAGAFYGVTSQYESSENMTVTCSTKVCSFGKQVVEKVETEYARFENGRFVYRINRSPMCEYMINFIHKLKHLPEKYMMNSVLENFTILLVVTNRDTQETLLCMACVFEVSNSEHGAQHHIYRLVKD</sequence>
<reference key="1">
    <citation type="journal article" date="1991" name="Cell">
        <title>Cloning, expression, and transcriptional properties of the human enhancer factor TEF-1.</title>
        <authorList>
            <person name="Xiao J.H."/>
            <person name="Davidson I."/>
            <person name="Matthes H."/>
            <person name="Garnier J.-M."/>
            <person name="Chambon P."/>
        </authorList>
    </citation>
    <scope>NUCLEOTIDE SEQUENCE [GENOMIC DNA]</scope>
    <scope>PARTIAL PROTEIN SEQUENCE</scope>
</reference>
<reference key="2">
    <citation type="journal article" date="2006" name="Nature">
        <title>Human chromosome 11 DNA sequence and analysis including novel gene identification.</title>
        <authorList>
            <person name="Taylor T.D."/>
            <person name="Noguchi H."/>
            <person name="Totoki Y."/>
            <person name="Toyoda A."/>
            <person name="Kuroki Y."/>
            <person name="Dewar K."/>
            <person name="Lloyd C."/>
            <person name="Itoh T."/>
            <person name="Takeda T."/>
            <person name="Kim D.-W."/>
            <person name="She X."/>
            <person name="Barlow K.F."/>
            <person name="Bloom T."/>
            <person name="Bruford E."/>
            <person name="Chang J.L."/>
            <person name="Cuomo C.A."/>
            <person name="Eichler E."/>
            <person name="FitzGerald M.G."/>
            <person name="Jaffe D.B."/>
            <person name="LaButti K."/>
            <person name="Nicol R."/>
            <person name="Park H.-S."/>
            <person name="Seaman C."/>
            <person name="Sougnez C."/>
            <person name="Yang X."/>
            <person name="Zimmer A.R."/>
            <person name="Zody M.C."/>
            <person name="Birren B.W."/>
            <person name="Nusbaum C."/>
            <person name="Fujiyama A."/>
            <person name="Hattori M."/>
            <person name="Rogers J."/>
            <person name="Lander E.S."/>
            <person name="Sakaki Y."/>
        </authorList>
    </citation>
    <scope>NUCLEOTIDE SEQUENCE [LARGE SCALE GENOMIC DNA]</scope>
</reference>
<reference key="3">
    <citation type="journal article" date="2004" name="Genome Res.">
        <title>The status, quality, and expansion of the NIH full-length cDNA project: the Mammalian Gene Collection (MGC).</title>
        <authorList>
            <consortium name="The MGC Project Team"/>
        </authorList>
    </citation>
    <scope>NUCLEOTIDE SEQUENCE [LARGE SCALE MRNA] (ISOFORM 2)</scope>
</reference>
<reference key="4">
    <citation type="journal article" date="1991" name="Cell">
        <title>The TEA domain: a novel, highly conserved DNA-binding motif.</title>
        <authorList>
            <person name="Buerglin T.R."/>
        </authorList>
    </citation>
    <scope>DOMAIN TEA</scope>
</reference>
<reference key="5">
    <citation type="journal article" date="2008" name="Genes Dev.">
        <title>TEAD mediates YAP-dependent gene induction and growth control.</title>
        <authorList>
            <person name="Zhao B."/>
            <person name="Ye X."/>
            <person name="Yu J."/>
            <person name="Li L."/>
            <person name="Li W."/>
            <person name="Li S."/>
            <person name="Yu J."/>
            <person name="Lin J.D."/>
            <person name="Wang C.Y."/>
            <person name="Chinnaiyan A.M."/>
            <person name="Lai Z.C."/>
            <person name="Guan K.L."/>
        </authorList>
    </citation>
    <scope>FUNCTION</scope>
    <scope>INTERACTION WITH YAP1</scope>
    <scope>CHARACTERIZATION OF VARIANT SCRA HIS-421</scope>
</reference>
<reference key="6">
    <citation type="journal article" date="2009" name="J. Biol. Chem.">
        <title>TEAD transcription factors mediate the function of TAZ in cell growth and epithelial-mesenchymal transition.</title>
        <authorList>
            <person name="Zhang H."/>
            <person name="Liu C.Y."/>
            <person name="Zha Z.Y."/>
            <person name="Zhao B."/>
            <person name="Yao J."/>
            <person name="Zhao S."/>
            <person name="Xiong Y."/>
            <person name="Lei Q.Y."/>
            <person name="Guan K.L."/>
        </authorList>
    </citation>
    <scope>IDENTIFICATION BY MASS SPECTROMETRY</scope>
    <scope>FUNCTION</scope>
    <scope>INTERACTION WITH WWTR1</scope>
</reference>
<reference key="7">
    <citation type="journal article" date="2010" name="Sci. Signal.">
        <title>Quantitative phosphoproteomics reveals widespread full phosphorylation site occupancy during mitosis.</title>
        <authorList>
            <person name="Olsen J.V."/>
            <person name="Vermeulen M."/>
            <person name="Santamaria A."/>
            <person name="Kumar C."/>
            <person name="Miller M.L."/>
            <person name="Jensen L.J."/>
            <person name="Gnad F."/>
            <person name="Cox J."/>
            <person name="Jensen T.S."/>
            <person name="Nigg E.A."/>
            <person name="Brunak S."/>
            <person name="Mann M."/>
        </authorList>
    </citation>
    <scope>ACETYLATION [LARGE SCALE ANALYSIS] AT MET-1</scope>
    <scope>IDENTIFICATION BY MASS SPECTROMETRY [LARGE SCALE ANALYSIS]</scope>
    <source>
        <tissue>Cervix carcinoma</tissue>
    </source>
</reference>
<reference key="8">
    <citation type="journal article" date="2011" name="Sci. Signal.">
        <title>System-wide temporal characterization of the proteome and phosphoproteome of human embryonic stem cell differentiation.</title>
        <authorList>
            <person name="Rigbolt K.T."/>
            <person name="Prokhorova T.A."/>
            <person name="Akimov V."/>
            <person name="Henningsen J."/>
            <person name="Johansen P.T."/>
            <person name="Kratchmarova I."/>
            <person name="Kassem M."/>
            <person name="Mann M."/>
            <person name="Olsen J.V."/>
            <person name="Blagoev B."/>
        </authorList>
    </citation>
    <scope>ACETYLATION [LARGE SCALE ANALYSIS] AT MET-1</scope>
    <scope>IDENTIFICATION BY MASS SPECTROMETRY [LARGE SCALE ANALYSIS]</scope>
</reference>
<reference key="9">
    <citation type="journal article" date="2013" name="J. Proteome Res.">
        <title>Toward a comprehensive characterization of a human cancer cell phosphoproteome.</title>
        <authorList>
            <person name="Zhou H."/>
            <person name="Di Palma S."/>
            <person name="Preisinger C."/>
            <person name="Peng M."/>
            <person name="Polat A.N."/>
            <person name="Heck A.J."/>
            <person name="Mohammed S."/>
        </authorList>
    </citation>
    <scope>PHOSPHORYLATION [LARGE SCALE ANALYSIS] AT SER-11</scope>
    <scope>IDENTIFICATION BY MASS SPECTROMETRY [LARGE SCALE ANALYSIS]</scope>
    <source>
        <tissue>Cervix carcinoma</tissue>
    </source>
</reference>
<reference key="10">
    <citation type="journal article" date="2024" name="J. Clin. Invest.">
        <title>The alanyl-tRNA synthetase AARS1 moonlights as a lactyltransferase to promote YAP signaling in gastric cancer.</title>
        <authorList>
            <person name="Ju J."/>
            <person name="Zhang H."/>
            <person name="Lin M."/>
            <person name="Yan Z."/>
            <person name="An L."/>
            <person name="Cao Z."/>
            <person name="Geng D."/>
            <person name="Yue J."/>
            <person name="Tang Y."/>
            <person name="Tian L."/>
            <person name="Chen F."/>
            <person name="Han Y."/>
            <person name="Wang W."/>
            <person name="Zhao S."/>
            <person name="Jiao S."/>
            <person name="Zhou Z."/>
        </authorList>
    </citation>
    <scope>SUBCELLULAR LOCATION</scope>
    <scope>LACTYLATION AT LYS-108</scope>
    <scope>MUTAGENESIS OF LYS-108</scope>
</reference>
<reference key="11">
    <citation type="journal article" date="2006" name="Proc. Natl. Acad. Sci. U.S.A.">
        <title>Insights into transcription enhancer factor 1 (TEF-1) activity from the solution structure of the TEA domain.</title>
        <authorList>
            <person name="Anbanandam A."/>
            <person name="Albarado D.C."/>
            <person name="Nguyen C.T."/>
            <person name="Halder G."/>
            <person name="Gao X."/>
            <person name="Veeraraghavan S."/>
        </authorList>
    </citation>
    <scope>STRUCTURE BY NMR OF 28-104</scope>
</reference>
<reference key="12">
    <citation type="journal article" date="2010" name="Genes Dev.">
        <title>Structural insights into the YAP and TEAD complex.</title>
        <authorList>
            <person name="Li Z."/>
            <person name="Zhao B."/>
            <person name="Wang P."/>
            <person name="Chen F."/>
            <person name="Dong Z."/>
            <person name="Yang H."/>
            <person name="Guan K.L."/>
            <person name="Xu Y."/>
        </authorList>
    </citation>
    <scope>X-RAY CRYSTALLOGRAPHY (2.8 ANGSTROMS) OF 209-426 IN COMPLEX WITH YAP1</scope>
    <scope>CHARACTERIZATION OF VARIANT SCRA HIS-421</scope>
    <scope>MUTAGENESIS OF TYR-421</scope>
</reference>
<reference key="13">
    <citation type="journal article" date="2004" name="Hum. Mol. Genet.">
        <title>A novel TEAD1 mutation is the causative allele in Sveinsson's chorioretinal atrophy (helicoid peripapillary chorioretinal degeneration).</title>
        <authorList>
            <person name="Fossdal R."/>
            <person name="Jonasson F."/>
            <person name="Kristjansdottir G.T."/>
            <person name="Kong A."/>
            <person name="Stefansson H."/>
            <person name="Gosh S."/>
            <person name="Gulcher J.R."/>
            <person name="Stefansson K."/>
        </authorList>
    </citation>
    <scope>VARIANT SCRA HIS-421</scope>
</reference>
<keyword id="KW-0002">3D-structure</keyword>
<keyword id="KW-0007">Acetylation</keyword>
<keyword id="KW-0010">Activator</keyword>
<keyword id="KW-0025">Alternative splicing</keyword>
<keyword id="KW-0903">Direct protein sequencing</keyword>
<keyword id="KW-0225">Disease variant</keyword>
<keyword id="KW-0238">DNA-binding</keyword>
<keyword id="KW-0539">Nucleus</keyword>
<keyword id="KW-0597">Phosphoprotein</keyword>
<keyword id="KW-1267">Proteomics identification</keyword>
<keyword id="KW-1185">Reference proteome</keyword>
<keyword id="KW-0804">Transcription</keyword>
<keyword id="KW-0805">Transcription regulation</keyword>